<reference key="1">
    <citation type="journal article" date="2002" name="Nat. Genet.">
        <title>Adaptive evolution of a duplicated pancreatic ribonuclease gene in a leaf-eating monkey.</title>
        <authorList>
            <person name="Zhang J."/>
            <person name="Zhang Y.-P."/>
            <person name="Rosenberg H.F."/>
        </authorList>
    </citation>
    <scope>NUCLEOTIDE SEQUENCE [GENOMIC DNA]</scope>
</reference>
<keyword id="KW-1015">Disulfide bond</keyword>
<keyword id="KW-0255">Endonuclease</keyword>
<keyword id="KW-0325">Glycoprotein</keyword>
<keyword id="KW-0378">Hydrolase</keyword>
<keyword id="KW-0456">Lyase</keyword>
<keyword id="KW-0540">Nuclease</keyword>
<keyword id="KW-1185">Reference proteome</keyword>
<keyword id="KW-0964">Secreted</keyword>
<keyword id="KW-0732">Signal</keyword>
<evidence type="ECO:0000250" key="1"/>
<evidence type="ECO:0000255" key="2"/>
<evidence type="ECO:0000305" key="3"/>
<dbReference type="EC" id="4.6.1.18"/>
<dbReference type="EMBL" id="AF449631">
    <property type="protein sequence ID" value="AAL87052.1"/>
    <property type="molecule type" value="Genomic_DNA"/>
</dbReference>
<dbReference type="RefSeq" id="XP_003282073.1">
    <property type="nucleotide sequence ID" value="XM_003282025.2"/>
</dbReference>
<dbReference type="RefSeq" id="XP_003282075.1">
    <property type="nucleotide sequence ID" value="XM_003282027.2"/>
</dbReference>
<dbReference type="RefSeq" id="XP_012359309.1">
    <property type="nucleotide sequence ID" value="XM_012503855.1"/>
</dbReference>
<dbReference type="RefSeq" id="XP_012359311.1">
    <property type="nucleotide sequence ID" value="XM_012503857.1"/>
</dbReference>
<dbReference type="BMRB" id="Q8SQ11"/>
<dbReference type="SMR" id="Q8SQ11"/>
<dbReference type="FunCoup" id="Q8SQ11">
    <property type="interactions" value="69"/>
</dbReference>
<dbReference type="STRING" id="61853.ENSNLEP00000009150"/>
<dbReference type="GlyCosmos" id="Q8SQ11">
    <property type="glycosylation" value="4 sites, No reported glycans"/>
</dbReference>
<dbReference type="Ensembl" id="ENSNLET00000009590.2">
    <property type="protein sequence ID" value="ENSNLEP00000009150.1"/>
    <property type="gene ID" value="ENSNLEG00000007524.2"/>
</dbReference>
<dbReference type="GeneID" id="100591741"/>
<dbReference type="KEGG" id="nle:100591741"/>
<dbReference type="eggNOG" id="ENOG502SQ4K">
    <property type="taxonomic scope" value="Eukaryota"/>
</dbReference>
<dbReference type="GeneTree" id="ENSGT00940000160869"/>
<dbReference type="HOGENOM" id="CLU_117006_0_0_1"/>
<dbReference type="InParanoid" id="Q8SQ11"/>
<dbReference type="OMA" id="CVQPSLG"/>
<dbReference type="OrthoDB" id="8573660at2759"/>
<dbReference type="TreeFam" id="TF333393"/>
<dbReference type="Proteomes" id="UP000001073">
    <property type="component" value="Unplaced"/>
</dbReference>
<dbReference type="GO" id="GO:0005576">
    <property type="term" value="C:extracellular region"/>
    <property type="evidence" value="ECO:0007669"/>
    <property type="project" value="UniProtKB-SubCell"/>
</dbReference>
<dbReference type="GO" id="GO:0016829">
    <property type="term" value="F:lyase activity"/>
    <property type="evidence" value="ECO:0007669"/>
    <property type="project" value="UniProtKB-KW"/>
</dbReference>
<dbReference type="GO" id="GO:0003676">
    <property type="term" value="F:nucleic acid binding"/>
    <property type="evidence" value="ECO:0007669"/>
    <property type="project" value="InterPro"/>
</dbReference>
<dbReference type="GO" id="GO:0004522">
    <property type="term" value="F:ribonuclease A activity"/>
    <property type="evidence" value="ECO:0007669"/>
    <property type="project" value="UniProtKB-EC"/>
</dbReference>
<dbReference type="GO" id="GO:0050830">
    <property type="term" value="P:defense response to Gram-positive bacterium"/>
    <property type="evidence" value="ECO:0007669"/>
    <property type="project" value="TreeGrafter"/>
</dbReference>
<dbReference type="CDD" id="cd06265">
    <property type="entry name" value="RNase_A_canonical"/>
    <property type="match status" value="1"/>
</dbReference>
<dbReference type="FunFam" id="3.10.130.10:FF:000001">
    <property type="entry name" value="Ribonuclease pancreatic"/>
    <property type="match status" value="1"/>
</dbReference>
<dbReference type="Gene3D" id="3.10.130.10">
    <property type="entry name" value="Ribonuclease A-like domain"/>
    <property type="match status" value="1"/>
</dbReference>
<dbReference type="InterPro" id="IPR001427">
    <property type="entry name" value="RNaseA"/>
</dbReference>
<dbReference type="InterPro" id="IPR036816">
    <property type="entry name" value="RNaseA-like_dom_sf"/>
</dbReference>
<dbReference type="InterPro" id="IPR023411">
    <property type="entry name" value="RNaseA_AS"/>
</dbReference>
<dbReference type="InterPro" id="IPR023412">
    <property type="entry name" value="RNaseA_domain"/>
</dbReference>
<dbReference type="PANTHER" id="PTHR11437">
    <property type="entry name" value="RIBONUCLEASE"/>
    <property type="match status" value="1"/>
</dbReference>
<dbReference type="PANTHER" id="PTHR11437:SF24">
    <property type="entry name" value="RIBONUCLEASE PANCREATIC"/>
    <property type="match status" value="1"/>
</dbReference>
<dbReference type="Pfam" id="PF00074">
    <property type="entry name" value="RnaseA"/>
    <property type="match status" value="1"/>
</dbReference>
<dbReference type="PRINTS" id="PR00794">
    <property type="entry name" value="RIBONUCLEASE"/>
</dbReference>
<dbReference type="SMART" id="SM00092">
    <property type="entry name" value="RNAse_Pc"/>
    <property type="match status" value="1"/>
</dbReference>
<dbReference type="SUPFAM" id="SSF54076">
    <property type="entry name" value="RNase A-like"/>
    <property type="match status" value="1"/>
</dbReference>
<dbReference type="PROSITE" id="PS00127">
    <property type="entry name" value="RNASE_PANCREATIC"/>
    <property type="match status" value="1"/>
</dbReference>
<comment type="function">
    <text evidence="1">Endonuclease that catalyzes the cleavage of RNA on the 3' side of pyrimidine nucleotides. Acts on single-stranded and double-stranded RNA (By similarity).</text>
</comment>
<comment type="catalytic activity">
    <reaction>
        <text>an [RNA] containing cytidine + H2O = an [RNA]-3'-cytidine-3'-phosphate + a 5'-hydroxy-ribonucleotide-3'-[RNA].</text>
        <dbReference type="EC" id="4.6.1.18"/>
    </reaction>
</comment>
<comment type="catalytic activity">
    <reaction>
        <text>an [RNA] containing uridine + H2O = an [RNA]-3'-uridine-3'-phosphate + a 5'-hydroxy-ribonucleotide-3'-[RNA].</text>
        <dbReference type="EC" id="4.6.1.18"/>
    </reaction>
</comment>
<comment type="subunit">
    <text evidence="1">Monomer. Interacts with and forms tight 1:1 complexes with RNH1. Dimerization of two such complexes may occur. Interaction with RNH1 inhibits this protein (By similarity).</text>
</comment>
<comment type="subcellular location">
    <subcellularLocation>
        <location evidence="1">Secreted</location>
    </subcellularLocation>
</comment>
<comment type="similarity">
    <text evidence="3">Belongs to the pancreatic ribonuclease family.</text>
</comment>
<organism>
    <name type="scientific">Nomascus leucogenys</name>
    <name type="common">Northern white-cheeked gibbon</name>
    <name type="synonym">Hylobates leucogenys</name>
    <dbReference type="NCBI Taxonomy" id="61853"/>
    <lineage>
        <taxon>Eukaryota</taxon>
        <taxon>Metazoa</taxon>
        <taxon>Chordata</taxon>
        <taxon>Craniata</taxon>
        <taxon>Vertebrata</taxon>
        <taxon>Euteleostomi</taxon>
        <taxon>Mammalia</taxon>
        <taxon>Eutheria</taxon>
        <taxon>Euarchontoglires</taxon>
        <taxon>Primates</taxon>
        <taxon>Haplorrhini</taxon>
        <taxon>Catarrhini</taxon>
        <taxon>Hylobatidae</taxon>
        <taxon>Nomascus</taxon>
    </lineage>
</organism>
<accession>Q8SQ11</accession>
<sequence>MALEKSLVLLPLFVLMLLVLGWVQPSLGKESRAKKFQRQHMDSDSSPSSNSTYCNQMMRRRNMTQGRCKPVNTFVHEPLVDVQNVCFQEKVTCKNGQANCYKSNSSMHITDCRLTNGSRYPNCAYRTSPKERHIIVACEGSPYVPVHFDASVEDST</sequence>
<feature type="signal peptide" evidence="1">
    <location>
        <begin position="1"/>
        <end position="28"/>
    </location>
</feature>
<feature type="chain" id="PRO_0000030922" description="Ribonuclease pancreatic">
    <location>
        <begin position="29"/>
        <end position="156"/>
    </location>
</feature>
<feature type="active site" description="Proton acceptor" evidence="1">
    <location>
        <position position="40"/>
    </location>
</feature>
<feature type="active site" description="Proton donor" evidence="1">
    <location>
        <position position="147"/>
    </location>
</feature>
<feature type="binding site" evidence="1">
    <location>
        <position position="35"/>
    </location>
    <ligand>
        <name>substrate</name>
    </ligand>
</feature>
<feature type="binding site" evidence="1">
    <location>
        <position position="38"/>
    </location>
    <ligand>
        <name>substrate</name>
    </ligand>
</feature>
<feature type="binding site" evidence="1">
    <location>
        <begin position="69"/>
        <end position="73"/>
    </location>
    <ligand>
        <name>substrate</name>
    </ligand>
</feature>
<feature type="binding site" evidence="1">
    <location>
        <position position="94"/>
    </location>
    <ligand>
        <name>substrate</name>
    </ligand>
</feature>
<feature type="binding site" evidence="1">
    <location>
        <position position="113"/>
    </location>
    <ligand>
        <name>substrate</name>
    </ligand>
</feature>
<feature type="glycosylation site" description="N-linked (GlcNAc...) asparagine" evidence="2">
    <location>
        <position position="50"/>
    </location>
</feature>
<feature type="glycosylation site" description="N-linked (GlcNAc...) asparagine" evidence="2">
    <location>
        <position position="62"/>
    </location>
</feature>
<feature type="glycosylation site" description="N-linked (GlcNAc...) asparagine" evidence="2">
    <location>
        <position position="104"/>
    </location>
</feature>
<feature type="glycosylation site" description="N-linked (GlcNAc...) asparagine" evidence="2">
    <location>
        <position position="116"/>
    </location>
</feature>
<feature type="disulfide bond" evidence="1">
    <location>
        <begin position="54"/>
        <end position="112"/>
    </location>
</feature>
<feature type="disulfide bond" evidence="1">
    <location>
        <begin position="68"/>
        <end position="123"/>
    </location>
</feature>
<feature type="disulfide bond" evidence="1">
    <location>
        <begin position="86"/>
        <end position="138"/>
    </location>
</feature>
<feature type="disulfide bond" evidence="1">
    <location>
        <begin position="93"/>
        <end position="100"/>
    </location>
</feature>
<protein>
    <recommendedName>
        <fullName>Ribonuclease pancreatic</fullName>
        <ecNumber>4.6.1.18</ecNumber>
    </recommendedName>
    <alternativeName>
        <fullName>RNase 1</fullName>
    </alternativeName>
    <alternativeName>
        <fullName>RNase A</fullName>
    </alternativeName>
</protein>
<name>RNAS1_NOMLE</name>
<proteinExistence type="inferred from homology"/>
<gene>
    <name type="primary">RNASE1</name>
    <name type="synonym">RNS1</name>
</gene>